<organism>
    <name type="scientific">Rattus norvegicus</name>
    <name type="common">Rat</name>
    <dbReference type="NCBI Taxonomy" id="10116"/>
    <lineage>
        <taxon>Eukaryota</taxon>
        <taxon>Metazoa</taxon>
        <taxon>Chordata</taxon>
        <taxon>Craniata</taxon>
        <taxon>Vertebrata</taxon>
        <taxon>Euteleostomi</taxon>
        <taxon>Mammalia</taxon>
        <taxon>Eutheria</taxon>
        <taxon>Euarchontoglires</taxon>
        <taxon>Glires</taxon>
        <taxon>Rodentia</taxon>
        <taxon>Myomorpha</taxon>
        <taxon>Muroidea</taxon>
        <taxon>Muridae</taxon>
        <taxon>Murinae</taxon>
        <taxon>Rattus</taxon>
    </lineage>
</organism>
<evidence type="ECO:0000250" key="1"/>
<evidence type="ECO:0000250" key="2">
    <source>
        <dbReference type="UniProtKB" id="P41227"/>
    </source>
</evidence>
<evidence type="ECO:0000250" key="3">
    <source>
        <dbReference type="UniProtKB" id="Q9BSU3"/>
    </source>
</evidence>
<evidence type="ECO:0000255" key="4">
    <source>
        <dbReference type="PROSITE-ProRule" id="PRU00532"/>
    </source>
</evidence>
<evidence type="ECO:0000256" key="5">
    <source>
        <dbReference type="SAM" id="MobiDB-lite"/>
    </source>
</evidence>
<evidence type="ECO:0000305" key="6"/>
<comment type="function">
    <text evidence="3">Displays alpha (N-terminal) acetyltransferase activity. Proposed alternative catalytic subunit of the N-terminal acetyltransferase A (NatA) complex.</text>
</comment>
<comment type="catalytic activity">
    <reaction evidence="2">
        <text>N-terminal glycyl-[protein] + acetyl-CoA = N-terminal N(alpha)-acetylglycyl-[protein] + CoA + H(+)</text>
        <dbReference type="Rhea" id="RHEA:50496"/>
        <dbReference type="Rhea" id="RHEA-COMP:12666"/>
        <dbReference type="Rhea" id="RHEA-COMP:12700"/>
        <dbReference type="ChEBI" id="CHEBI:15378"/>
        <dbReference type="ChEBI" id="CHEBI:57287"/>
        <dbReference type="ChEBI" id="CHEBI:57288"/>
        <dbReference type="ChEBI" id="CHEBI:64723"/>
        <dbReference type="ChEBI" id="CHEBI:133369"/>
        <dbReference type="EC" id="2.3.1.255"/>
    </reaction>
</comment>
<comment type="catalytic activity">
    <reaction evidence="2">
        <text>N-terminal L-alanyl-[protein] + acetyl-CoA = N-terminal N(alpha)-acetyl-L-alanyl-[protein] + CoA + H(+)</text>
        <dbReference type="Rhea" id="RHEA:50500"/>
        <dbReference type="Rhea" id="RHEA-COMP:12701"/>
        <dbReference type="Rhea" id="RHEA-COMP:12702"/>
        <dbReference type="ChEBI" id="CHEBI:15378"/>
        <dbReference type="ChEBI" id="CHEBI:57287"/>
        <dbReference type="ChEBI" id="CHEBI:57288"/>
        <dbReference type="ChEBI" id="CHEBI:64718"/>
        <dbReference type="ChEBI" id="CHEBI:83683"/>
        <dbReference type="EC" id="2.3.1.255"/>
    </reaction>
</comment>
<comment type="catalytic activity">
    <reaction evidence="2">
        <text>N-terminal L-seryl-[protein] + acetyl-CoA = N-terminal N(alpha)-acetyl-L-seryl-[protein] + CoA + H(+)</text>
        <dbReference type="Rhea" id="RHEA:50504"/>
        <dbReference type="Rhea" id="RHEA-COMP:12703"/>
        <dbReference type="Rhea" id="RHEA-COMP:12704"/>
        <dbReference type="ChEBI" id="CHEBI:15378"/>
        <dbReference type="ChEBI" id="CHEBI:57287"/>
        <dbReference type="ChEBI" id="CHEBI:57288"/>
        <dbReference type="ChEBI" id="CHEBI:64738"/>
        <dbReference type="ChEBI" id="CHEBI:83690"/>
        <dbReference type="EC" id="2.3.1.255"/>
    </reaction>
</comment>
<comment type="catalytic activity">
    <reaction evidence="2">
        <text>N-terminal L-valyl-[protein] + acetyl-CoA = N-terminal N(alpha)-acetyl-L-valyl-[protein] + CoA + H(+)</text>
        <dbReference type="Rhea" id="RHEA:50508"/>
        <dbReference type="Rhea" id="RHEA-COMP:12705"/>
        <dbReference type="Rhea" id="RHEA-COMP:12706"/>
        <dbReference type="ChEBI" id="CHEBI:15378"/>
        <dbReference type="ChEBI" id="CHEBI:57287"/>
        <dbReference type="ChEBI" id="CHEBI:57288"/>
        <dbReference type="ChEBI" id="CHEBI:64741"/>
        <dbReference type="ChEBI" id="CHEBI:133371"/>
        <dbReference type="EC" id="2.3.1.255"/>
    </reaction>
</comment>
<comment type="catalytic activity">
    <reaction evidence="2">
        <text>N-terminal L-cysteinyl-[protein] + acetyl-CoA = N-terminal N(alpha)-acetyl-L-cysteinyl-[protein] + CoA + H(+)</text>
        <dbReference type="Rhea" id="RHEA:50512"/>
        <dbReference type="Rhea" id="RHEA-COMP:12707"/>
        <dbReference type="Rhea" id="RHEA-COMP:12708"/>
        <dbReference type="ChEBI" id="CHEBI:15378"/>
        <dbReference type="ChEBI" id="CHEBI:57287"/>
        <dbReference type="ChEBI" id="CHEBI:57288"/>
        <dbReference type="ChEBI" id="CHEBI:65250"/>
        <dbReference type="ChEBI" id="CHEBI:133372"/>
        <dbReference type="EC" id="2.3.1.255"/>
    </reaction>
</comment>
<comment type="catalytic activity">
    <reaction evidence="2">
        <text>N-terminal L-threonyl-[protein] + acetyl-CoA = N-terminal N(alpha)-acetyl-L-threonyl-[protein] + CoA + H(+)</text>
        <dbReference type="Rhea" id="RHEA:50516"/>
        <dbReference type="Rhea" id="RHEA-COMP:12709"/>
        <dbReference type="Rhea" id="RHEA-COMP:12710"/>
        <dbReference type="ChEBI" id="CHEBI:15378"/>
        <dbReference type="ChEBI" id="CHEBI:57287"/>
        <dbReference type="ChEBI" id="CHEBI:57288"/>
        <dbReference type="ChEBI" id="CHEBI:64739"/>
        <dbReference type="ChEBI" id="CHEBI:133375"/>
        <dbReference type="EC" id="2.3.1.255"/>
    </reaction>
</comment>
<comment type="subunit">
    <text evidence="3">Component of the N-terminal acetyltransferase A (NatA) complex composed of NAA11 and NAA15. Interacts with HIF1A.</text>
</comment>
<comment type="subcellular location">
    <subcellularLocation>
        <location evidence="3">Cytoplasm</location>
    </subcellularLocation>
    <subcellularLocation>
        <location evidence="3">Nucleus</location>
    </subcellularLocation>
</comment>
<comment type="similarity">
    <text evidence="6">Belongs to the acetyltransferase family. ARD1 subfamily.</text>
</comment>
<gene>
    <name type="primary">Naa11</name>
    <name type="synonym">Ard1b</name>
    <name type="synonym">Ard2</name>
</gene>
<accession>Q4V8K3</accession>
<keyword id="KW-0012">Acyltransferase</keyword>
<keyword id="KW-0963">Cytoplasm</keyword>
<keyword id="KW-0539">Nucleus</keyword>
<keyword id="KW-1185">Reference proteome</keyword>
<keyword id="KW-0808">Transferase</keyword>
<feature type="chain" id="PRO_0000305011" description="N-alpha-acetyltransferase 11">
    <location>
        <begin position="1"/>
        <end position="246"/>
    </location>
</feature>
<feature type="domain" description="N-acetyltransferase" evidence="4">
    <location>
        <begin position="1"/>
        <end position="152"/>
    </location>
</feature>
<feature type="region of interest" description="Interaction with NAA15" evidence="1">
    <location>
        <begin position="1"/>
        <end position="58"/>
    </location>
</feature>
<feature type="region of interest" description="Disordered" evidence="5">
    <location>
        <begin position="175"/>
        <end position="246"/>
    </location>
</feature>
<feature type="compositionally biased region" description="Polar residues" evidence="5">
    <location>
        <begin position="230"/>
        <end position="246"/>
    </location>
</feature>
<name>NAA11_RAT</name>
<protein>
    <recommendedName>
        <fullName>N-alpha-acetyltransferase 11</fullName>
        <ecNumber evidence="2">2.3.1.255</ecNumber>
    </recommendedName>
    <alternativeName>
        <fullName>N-terminal acetyltransferase complex ARD1 subunit homolog B</fullName>
    </alternativeName>
    <alternativeName>
        <fullName>NatA catalytic subunit Naa11</fullName>
    </alternativeName>
</protein>
<dbReference type="EC" id="2.3.1.255" evidence="2"/>
<dbReference type="EMBL" id="BC097350">
    <property type="protein sequence ID" value="AAH97350.1"/>
    <property type="molecule type" value="mRNA"/>
</dbReference>
<dbReference type="RefSeq" id="NP_001019913.1">
    <property type="nucleotide sequence ID" value="NM_001024742.1"/>
</dbReference>
<dbReference type="SMR" id="Q4V8K3"/>
<dbReference type="FunCoup" id="Q4V8K3">
    <property type="interactions" value="201"/>
</dbReference>
<dbReference type="STRING" id="10116.ENSRNOP00000002776"/>
<dbReference type="iPTMnet" id="Q4V8K3"/>
<dbReference type="PhosphoSitePlus" id="Q4V8K3"/>
<dbReference type="jPOST" id="Q4V8K3"/>
<dbReference type="PaxDb" id="10116-ENSRNOP00000002776"/>
<dbReference type="Ensembl" id="ENSRNOT00000002776.6">
    <property type="protein sequence ID" value="ENSRNOP00000002776.4"/>
    <property type="gene ID" value="ENSRNOG00000002031.6"/>
</dbReference>
<dbReference type="GeneID" id="289482"/>
<dbReference type="KEGG" id="rno:289482"/>
<dbReference type="UCSC" id="RGD:1564723">
    <property type="organism name" value="rat"/>
</dbReference>
<dbReference type="AGR" id="RGD:1564723"/>
<dbReference type="CTD" id="84779"/>
<dbReference type="RGD" id="1564723">
    <property type="gene designation" value="Naa11"/>
</dbReference>
<dbReference type="eggNOG" id="KOG3235">
    <property type="taxonomic scope" value="Eukaryota"/>
</dbReference>
<dbReference type="GeneTree" id="ENSGT00940000164242"/>
<dbReference type="HOGENOM" id="CLU_013985_7_0_1"/>
<dbReference type="InParanoid" id="Q4V8K3"/>
<dbReference type="OMA" id="TISHRWR"/>
<dbReference type="OrthoDB" id="16690at9989"/>
<dbReference type="PhylomeDB" id="Q4V8K3"/>
<dbReference type="TreeFam" id="TF300078"/>
<dbReference type="PRO" id="PR:Q4V8K3"/>
<dbReference type="Proteomes" id="UP000002494">
    <property type="component" value="Chromosome 14"/>
</dbReference>
<dbReference type="Bgee" id="ENSRNOG00000002031">
    <property type="expression patterns" value="Expressed in testis and 2 other cell types or tissues"/>
</dbReference>
<dbReference type="GO" id="GO:0031415">
    <property type="term" value="C:NatA complex"/>
    <property type="evidence" value="ECO:0000266"/>
    <property type="project" value="RGD"/>
</dbReference>
<dbReference type="GO" id="GO:0005634">
    <property type="term" value="C:nucleus"/>
    <property type="evidence" value="ECO:0007669"/>
    <property type="project" value="UniProtKB-SubCell"/>
</dbReference>
<dbReference type="GO" id="GO:1990189">
    <property type="term" value="F:protein N-terminal-serine acetyltransferase activity"/>
    <property type="evidence" value="ECO:0000318"/>
    <property type="project" value="GO_Central"/>
</dbReference>
<dbReference type="GO" id="GO:0004596">
    <property type="term" value="F:protein-N-terminal amino-acid acetyltransferase activity"/>
    <property type="evidence" value="ECO:0000266"/>
    <property type="project" value="RGD"/>
</dbReference>
<dbReference type="GO" id="GO:0008999">
    <property type="term" value="F:protein-N-terminal-alanine acetyltransferase activity"/>
    <property type="evidence" value="ECO:0007669"/>
    <property type="project" value="RHEA"/>
</dbReference>
<dbReference type="GO" id="GO:1990190">
    <property type="term" value="F:protein-N-terminal-glutamate acetyltransferase activity"/>
    <property type="evidence" value="ECO:0000318"/>
    <property type="project" value="GO_Central"/>
</dbReference>
<dbReference type="CDD" id="cd04301">
    <property type="entry name" value="NAT_SF"/>
    <property type="match status" value="1"/>
</dbReference>
<dbReference type="FunFam" id="3.40.630.30:FF:000014">
    <property type="entry name" value="N-alpha-acetyltransferase 10 isoform X1"/>
    <property type="match status" value="1"/>
</dbReference>
<dbReference type="Gene3D" id="3.40.630.30">
    <property type="match status" value="1"/>
</dbReference>
<dbReference type="InterPro" id="IPR016181">
    <property type="entry name" value="Acyl_CoA_acyltransferase"/>
</dbReference>
<dbReference type="InterPro" id="IPR045047">
    <property type="entry name" value="Ard1-like"/>
</dbReference>
<dbReference type="InterPro" id="IPR000182">
    <property type="entry name" value="GNAT_dom"/>
</dbReference>
<dbReference type="PANTHER" id="PTHR23091:SF268">
    <property type="entry name" value="N-ALPHA-ACETYLTRANSFERASE 10"/>
    <property type="match status" value="1"/>
</dbReference>
<dbReference type="PANTHER" id="PTHR23091">
    <property type="entry name" value="N-TERMINAL ACETYLTRANSFERASE"/>
    <property type="match status" value="1"/>
</dbReference>
<dbReference type="Pfam" id="PF00583">
    <property type="entry name" value="Acetyltransf_1"/>
    <property type="match status" value="1"/>
</dbReference>
<dbReference type="SUPFAM" id="SSF55729">
    <property type="entry name" value="Acyl-CoA N-acyltransferases (Nat)"/>
    <property type="match status" value="1"/>
</dbReference>
<dbReference type="PROSITE" id="PS51186">
    <property type="entry name" value="GNAT"/>
    <property type="match status" value="1"/>
</dbReference>
<proteinExistence type="evidence at transcript level"/>
<sequence>MNIRNARPEDLMNMQHCNLLCLPENYQMKYYFYHGLSWPQLSYIAEDEDGKIVGYVLAKMEEDPDDVPHGHITSLAVKRSHRRLGLAQKLMDQASRAMIENFSAKYVSLHVRKSNRAALHLYSNTLNFQVSEVEPKYYADGEDAYAMKRDLAQMADELRRQLVLKKSRYVVLGSEENQEAQDSTLPDAEEACQPENPAGKGSEACQPENPAGKGSEACQPENPAGKDTGSHSTDVQDSSEYLDSTS</sequence>
<reference key="1">
    <citation type="journal article" date="2004" name="Genome Res.">
        <title>The status, quality, and expansion of the NIH full-length cDNA project: the Mammalian Gene Collection (MGC).</title>
        <authorList>
            <consortium name="The MGC Project Team"/>
        </authorList>
    </citation>
    <scope>NUCLEOTIDE SEQUENCE [LARGE SCALE MRNA]</scope>
    <source>
        <tissue>Placenta</tissue>
    </source>
</reference>
<reference key="2">
    <citation type="journal article" date="2006" name="BMC Biochem.">
        <title>Characterization of hARD2, a processed hARD1 gene duplicate, encoding a human protein N-alpha-acetyltransferase.</title>
        <authorList>
            <person name="Arnesen T."/>
            <person name="Betts M.J."/>
            <person name="Pendino F."/>
            <person name="Liberles D.A."/>
            <person name="Anderson D."/>
            <person name="Caro J."/>
            <person name="Kong X."/>
            <person name="Varhaug J.E."/>
            <person name="Lillehaug J.R."/>
        </authorList>
    </citation>
    <scope>IDENTIFICATION</scope>
</reference>